<reference key="1">
    <citation type="journal article" date="2001" name="Virology">
        <title>Analysis of the first complete DNA sequence of an invertebrate iridovirus: coding strategy of the genome of Chilo iridescent virus.</title>
        <authorList>
            <person name="Jakob N.J."/>
            <person name="Mueller K."/>
            <person name="Bahr U."/>
            <person name="Darai G."/>
        </authorList>
    </citation>
    <scope>NUCLEOTIDE SEQUENCE [LARGE SCALE GENOMIC DNA]</scope>
</reference>
<reference key="2">
    <citation type="journal article" date="2007" name="Virol. J.">
        <title>Comparative genomic analysis of the family Iridoviridae: re-annotating and defining the core set of iridovirus genes.</title>
        <authorList>
            <person name="Eaton H.E."/>
            <person name="Metcalf J."/>
            <person name="Penny E."/>
            <person name="Tcherepanov V."/>
            <person name="Upton C."/>
            <person name="Brunetti C.R."/>
        </authorList>
    </citation>
    <scope>GENOME REANNOTATION</scope>
</reference>
<gene>
    <name type="ORF">IIV6-468L</name>
</gene>
<name>468L_IIV6</name>
<sequence length="376" mass="44637">MEMATKKCNIFGVDSIGEPEGVVKKALDESLSLLDIFKFIEITNFDLDPIMTNWFWQVMVNNHSTHLGRVVLEWFGYEGEDSNQKQKFIDMLKRNKIPYKQLKHTDNEIELYPSIKEEMTLLPHKGAIASSKWLVMEPFNIKMAMLRLNTKNADIIKRYYIKMEELIRLYAQYTTLFQKREKETMSREMLDLRLMMEDMKITNHRQENMLIESHNMLRSMGVEIKDIRHENNDLLDQNNELLERVDDVLQKVNTVQKKLDISVEDRAPQPDKNTRRERFLLLKRNNDTFPYYTIRAQEINARKALKRQRNMYTDVTVLLDIVCHPNTKTFYVRIKDDLKSKGVEFNLCEINISNSNIDEAILVKEMMKINDKKRDV</sequence>
<accession>Q91F58</accession>
<protein>
    <recommendedName>
        <fullName>Putative MSV199 domain-containing protein 468L</fullName>
    </recommendedName>
</protein>
<proteinExistence type="predicted"/>
<organism>
    <name type="scientific">Invertebrate iridescent virus 6</name>
    <name type="common">IIV-6</name>
    <name type="synonym">Chilo iridescent virus</name>
    <dbReference type="NCBI Taxonomy" id="176652"/>
    <lineage>
        <taxon>Viruses</taxon>
        <taxon>Varidnaviria</taxon>
        <taxon>Bamfordvirae</taxon>
        <taxon>Nucleocytoviricota</taxon>
        <taxon>Megaviricetes</taxon>
        <taxon>Pimascovirales</taxon>
        <taxon>Iridoviridae</taxon>
        <taxon>Betairidovirinae</taxon>
        <taxon>Iridovirus</taxon>
    </lineage>
</organism>
<evidence type="ECO:0000255" key="1"/>
<organismHost>
    <name type="scientific">Acheta domesticus</name>
    <name type="common">House cricket</name>
    <dbReference type="NCBI Taxonomy" id="6997"/>
</organismHost>
<organismHost>
    <name type="scientific">Chilo suppressalis</name>
    <name type="common">Asiatic rice borer moth</name>
    <dbReference type="NCBI Taxonomy" id="168631"/>
</organismHost>
<organismHost>
    <name type="scientific">Gryllus bimaculatus</name>
    <name type="common">Two-spotted cricket</name>
    <dbReference type="NCBI Taxonomy" id="6999"/>
</organismHost>
<organismHost>
    <name type="scientific">Gryllus campestris</name>
    <dbReference type="NCBI Taxonomy" id="58607"/>
</organismHost>
<organismHost>
    <name type="scientific">Spodoptera frugiperda</name>
    <name type="common">Fall armyworm</name>
    <dbReference type="NCBI Taxonomy" id="7108"/>
</organismHost>
<feature type="chain" id="PRO_0000377899" description="Putative MSV199 domain-containing protein 468L">
    <location>
        <begin position="1"/>
        <end position="376"/>
    </location>
</feature>
<feature type="coiled-coil region" evidence="1">
    <location>
        <begin position="178"/>
        <end position="261"/>
    </location>
</feature>
<keyword id="KW-0175">Coiled coil</keyword>
<keyword id="KW-1185">Reference proteome</keyword>
<dbReference type="EMBL" id="AF303741">
    <property type="protein sequence ID" value="AAK82328.1"/>
    <property type="molecule type" value="Genomic_DNA"/>
</dbReference>
<dbReference type="RefSeq" id="NP_149463.1">
    <property type="nucleotide sequence ID" value="NC_003038.1"/>
</dbReference>
<dbReference type="SMR" id="Q91F58"/>
<dbReference type="KEGG" id="vg:1733332"/>
<dbReference type="OrthoDB" id="13638at10239"/>
<dbReference type="Proteomes" id="UP000001359">
    <property type="component" value="Genome"/>
</dbReference>
<dbReference type="InterPro" id="IPR022549">
    <property type="entry name" value="DUF3627"/>
</dbReference>
<dbReference type="InterPro" id="IPR018879">
    <property type="entry name" value="MSV199_dom"/>
</dbReference>
<dbReference type="Pfam" id="PF12299">
    <property type="entry name" value="DUF3627"/>
    <property type="match status" value="1"/>
</dbReference>
<dbReference type="Pfam" id="PF10553">
    <property type="entry name" value="MSV199"/>
    <property type="match status" value="1"/>
</dbReference>